<protein>
    <recommendedName>
        <fullName evidence="1">Aspartate--ammonia ligase</fullName>
        <ecNumber evidence="1">6.3.1.1</ecNumber>
    </recommendedName>
    <alternativeName>
        <fullName evidence="1">Asparagine synthetase A</fullName>
    </alternativeName>
</protein>
<evidence type="ECO:0000255" key="1">
    <source>
        <dbReference type="HAMAP-Rule" id="MF_00555"/>
    </source>
</evidence>
<gene>
    <name evidence="1" type="primary">asnA</name>
    <name type="ordered locus">FN0776</name>
</gene>
<organism>
    <name type="scientific">Fusobacterium nucleatum subsp. nucleatum (strain ATCC 25586 / DSM 15643 / BCRC 10681 / CIP 101130 / JCM 8532 / KCTC 2640 / LMG 13131 / VPI 4355)</name>
    <dbReference type="NCBI Taxonomy" id="190304"/>
    <lineage>
        <taxon>Bacteria</taxon>
        <taxon>Fusobacteriati</taxon>
        <taxon>Fusobacteriota</taxon>
        <taxon>Fusobacteriia</taxon>
        <taxon>Fusobacteriales</taxon>
        <taxon>Fusobacteriaceae</taxon>
        <taxon>Fusobacterium</taxon>
    </lineage>
</organism>
<dbReference type="EC" id="6.3.1.1" evidence="1"/>
<dbReference type="EMBL" id="AE009951">
    <property type="protein sequence ID" value="AAL94972.1"/>
    <property type="molecule type" value="Genomic_DNA"/>
</dbReference>
<dbReference type="RefSeq" id="NP_603673.1">
    <property type="nucleotide sequence ID" value="NC_003454.1"/>
</dbReference>
<dbReference type="RefSeq" id="WP_005903470.1">
    <property type="nucleotide sequence ID" value="NZ_OZ209243.1"/>
</dbReference>
<dbReference type="SMR" id="P58824"/>
<dbReference type="STRING" id="190304.FN0776"/>
<dbReference type="PaxDb" id="190304-FN0776"/>
<dbReference type="EnsemblBacteria" id="AAL94972">
    <property type="protein sequence ID" value="AAL94972"/>
    <property type="gene ID" value="FN0776"/>
</dbReference>
<dbReference type="GeneID" id="79783767"/>
<dbReference type="KEGG" id="fnu:FN0776"/>
<dbReference type="PATRIC" id="fig|190304.8.peg.1339"/>
<dbReference type="eggNOG" id="COG2502">
    <property type="taxonomic scope" value="Bacteria"/>
</dbReference>
<dbReference type="HOGENOM" id="CLU_071543_0_0_0"/>
<dbReference type="InParanoid" id="P58824"/>
<dbReference type="BioCyc" id="FNUC190304:G1FZS-1361-MONOMER"/>
<dbReference type="UniPathway" id="UPA00134">
    <property type="reaction ID" value="UER00194"/>
</dbReference>
<dbReference type="Proteomes" id="UP000002521">
    <property type="component" value="Chromosome"/>
</dbReference>
<dbReference type="GO" id="GO:0005829">
    <property type="term" value="C:cytosol"/>
    <property type="evidence" value="ECO:0000318"/>
    <property type="project" value="GO_Central"/>
</dbReference>
<dbReference type="GO" id="GO:0004071">
    <property type="term" value="F:aspartate-ammonia ligase activity"/>
    <property type="evidence" value="ECO:0000318"/>
    <property type="project" value="GO_Central"/>
</dbReference>
<dbReference type="GO" id="GO:0005524">
    <property type="term" value="F:ATP binding"/>
    <property type="evidence" value="ECO:0007669"/>
    <property type="project" value="UniProtKB-UniRule"/>
</dbReference>
<dbReference type="GO" id="GO:0006529">
    <property type="term" value="P:asparagine biosynthetic process"/>
    <property type="evidence" value="ECO:0000318"/>
    <property type="project" value="GO_Central"/>
</dbReference>
<dbReference type="GO" id="GO:0070981">
    <property type="term" value="P:L-asparagine biosynthetic process"/>
    <property type="evidence" value="ECO:0007669"/>
    <property type="project" value="UniProtKB-UniRule"/>
</dbReference>
<dbReference type="Gene3D" id="3.30.930.10">
    <property type="entry name" value="Bira Bifunctional Protein, Domain 2"/>
    <property type="match status" value="1"/>
</dbReference>
<dbReference type="HAMAP" id="MF_00555">
    <property type="entry name" value="AsnA"/>
    <property type="match status" value="1"/>
</dbReference>
<dbReference type="InterPro" id="IPR006195">
    <property type="entry name" value="aa-tRNA-synth_II"/>
</dbReference>
<dbReference type="InterPro" id="IPR045864">
    <property type="entry name" value="aa-tRNA-synth_II/BPL/LPL"/>
</dbReference>
<dbReference type="InterPro" id="IPR004618">
    <property type="entry name" value="AsnA"/>
</dbReference>
<dbReference type="NCBIfam" id="TIGR00669">
    <property type="entry name" value="asnA"/>
    <property type="match status" value="1"/>
</dbReference>
<dbReference type="PANTHER" id="PTHR30073">
    <property type="entry name" value="ASPARTATE--AMMONIA LIGASE"/>
    <property type="match status" value="1"/>
</dbReference>
<dbReference type="PANTHER" id="PTHR30073:SF5">
    <property type="entry name" value="ASPARTATE--AMMONIA LIGASE"/>
    <property type="match status" value="1"/>
</dbReference>
<dbReference type="Pfam" id="PF03590">
    <property type="entry name" value="AsnA"/>
    <property type="match status" value="1"/>
</dbReference>
<dbReference type="PIRSF" id="PIRSF001555">
    <property type="entry name" value="Asp_ammon_ligase"/>
    <property type="match status" value="1"/>
</dbReference>
<dbReference type="SUPFAM" id="SSF55681">
    <property type="entry name" value="Class II aaRS and biotin synthetases"/>
    <property type="match status" value="1"/>
</dbReference>
<dbReference type="PROSITE" id="PS50862">
    <property type="entry name" value="AA_TRNA_LIGASE_II"/>
    <property type="match status" value="1"/>
</dbReference>
<keyword id="KW-0028">Amino-acid biosynthesis</keyword>
<keyword id="KW-0061">Asparagine biosynthesis</keyword>
<keyword id="KW-0067">ATP-binding</keyword>
<keyword id="KW-0963">Cytoplasm</keyword>
<keyword id="KW-0436">Ligase</keyword>
<keyword id="KW-0547">Nucleotide-binding</keyword>
<keyword id="KW-1185">Reference proteome</keyword>
<feature type="chain" id="PRO_0000195876" description="Aspartate--ammonia ligase">
    <location>
        <begin position="1"/>
        <end position="327"/>
    </location>
</feature>
<sequence length="327" mass="37974">MAYISSLDILETEIAIKKVKDFFESHLSKELDLLRVSAPLFVIPESGLNDNLNGTERPVSFDTKSGERVEIVHSLAKWKRMALYRYNIENDKGIYTDMNAIRRDEDTDFIHSYYVDQWDWEKIISKEDRNEEYLKDVVRKIYSVFKKTEEYITTEYPKLTKKLPEEITFITAQELENKYPNLTPKNREHAAAKEYGAIFLMKIGGKLSSGEKHDGRAPDYDDWDLNGDIIFNYPLLGIGLELSSMGIRVDEKSLDEQLKIANCEDRRSLPYHQMILNKVLPYTIGGGIGQSRICMFFLDKLHIGEVQASIWSQEVHEICRQMNIKLL</sequence>
<proteinExistence type="inferred from homology"/>
<accession>P58824</accession>
<reference key="1">
    <citation type="journal article" date="2002" name="J. Bacteriol.">
        <title>Genome sequence and analysis of the oral bacterium Fusobacterium nucleatum strain ATCC 25586.</title>
        <authorList>
            <person name="Kapatral V."/>
            <person name="Anderson I."/>
            <person name="Ivanova N."/>
            <person name="Reznik G."/>
            <person name="Los T."/>
            <person name="Lykidis A."/>
            <person name="Bhattacharyya A."/>
            <person name="Bartman A."/>
            <person name="Gardner W."/>
            <person name="Grechkin G."/>
            <person name="Zhu L."/>
            <person name="Vasieva O."/>
            <person name="Chu L."/>
            <person name="Kogan Y."/>
            <person name="Chaga O."/>
            <person name="Goltsman E."/>
            <person name="Bernal A."/>
            <person name="Larsen N."/>
            <person name="D'Souza M."/>
            <person name="Walunas T."/>
            <person name="Pusch G."/>
            <person name="Haselkorn R."/>
            <person name="Fonstein M."/>
            <person name="Kyrpides N.C."/>
            <person name="Overbeek R."/>
        </authorList>
    </citation>
    <scope>NUCLEOTIDE SEQUENCE [LARGE SCALE GENOMIC DNA]</scope>
    <source>
        <strain>ATCC 25586 / DSM 15643 / BCRC 10681 / CIP 101130 / JCM 8532 / KCTC 2640 / LMG 13131 / VPI 4355</strain>
    </source>
</reference>
<comment type="catalytic activity">
    <reaction evidence="1">
        <text>L-aspartate + NH4(+) + ATP = L-asparagine + AMP + diphosphate + H(+)</text>
        <dbReference type="Rhea" id="RHEA:11372"/>
        <dbReference type="ChEBI" id="CHEBI:15378"/>
        <dbReference type="ChEBI" id="CHEBI:28938"/>
        <dbReference type="ChEBI" id="CHEBI:29991"/>
        <dbReference type="ChEBI" id="CHEBI:30616"/>
        <dbReference type="ChEBI" id="CHEBI:33019"/>
        <dbReference type="ChEBI" id="CHEBI:58048"/>
        <dbReference type="ChEBI" id="CHEBI:456215"/>
        <dbReference type="EC" id="6.3.1.1"/>
    </reaction>
</comment>
<comment type="pathway">
    <text evidence="1">Amino-acid biosynthesis; L-asparagine biosynthesis; L-asparagine from L-aspartate (ammonia route): step 1/1.</text>
</comment>
<comment type="subcellular location">
    <subcellularLocation>
        <location evidence="1">Cytoplasm</location>
    </subcellularLocation>
</comment>
<comment type="similarity">
    <text evidence="1">Belongs to the class-II aminoacyl-tRNA synthetase family. AsnA subfamily.</text>
</comment>
<name>ASNA_FUSNN</name>